<evidence type="ECO:0000255" key="1">
    <source>
        <dbReference type="HAMAP-Rule" id="MF_01208"/>
    </source>
</evidence>
<keyword id="KW-0328">Glycosyltransferase</keyword>
<keyword id="KW-0460">Magnesium</keyword>
<keyword id="KW-0665">Pyrimidine biosynthesis</keyword>
<keyword id="KW-1185">Reference proteome</keyword>
<keyword id="KW-0808">Transferase</keyword>
<name>PYRE_TROWT</name>
<sequence>MQRILDLRRIYALTVDPRTLHGSVWKVDFKVVRQELIRYIKDLALFEGEFILSSGQKSSYYIDLRRVSLDCRAAPIIGKVMFDLICDLQDVDAIGGLTMGADPIACAIMHYAASVGRSYNAFVVRKQKKTHGLARLIEGPDIRGKRVVIVEDTSTTGNSPITAARRAEETGATVAAIAVMVDRETGARQAIEKAGYSYYAALRVTDILDRGTAD</sequence>
<reference key="1">
    <citation type="journal article" date="2003" name="Genome Res.">
        <title>Tropheryma whipplei twist: a human pathogenic Actinobacteria with a reduced genome.</title>
        <authorList>
            <person name="Raoult D."/>
            <person name="Ogata H."/>
            <person name="Audic S."/>
            <person name="Robert C."/>
            <person name="Suhre K."/>
            <person name="Drancourt M."/>
            <person name="Claverie J.-M."/>
        </authorList>
    </citation>
    <scope>NUCLEOTIDE SEQUENCE [LARGE SCALE GENOMIC DNA]</scope>
    <source>
        <strain>Twist</strain>
    </source>
</reference>
<accession>Q83FI4</accession>
<proteinExistence type="inferred from homology"/>
<comment type="function">
    <text evidence="1">Catalyzes the transfer of a ribosyl phosphate group from 5-phosphoribose 1-diphosphate to orotate, leading to the formation of orotidine monophosphate (OMP).</text>
</comment>
<comment type="catalytic activity">
    <reaction evidence="1">
        <text>orotidine 5'-phosphate + diphosphate = orotate + 5-phospho-alpha-D-ribose 1-diphosphate</text>
        <dbReference type="Rhea" id="RHEA:10380"/>
        <dbReference type="ChEBI" id="CHEBI:30839"/>
        <dbReference type="ChEBI" id="CHEBI:33019"/>
        <dbReference type="ChEBI" id="CHEBI:57538"/>
        <dbReference type="ChEBI" id="CHEBI:58017"/>
        <dbReference type="EC" id="2.4.2.10"/>
    </reaction>
</comment>
<comment type="cofactor">
    <cofactor evidence="1">
        <name>Mg(2+)</name>
        <dbReference type="ChEBI" id="CHEBI:18420"/>
    </cofactor>
</comment>
<comment type="pathway">
    <text evidence="1">Pyrimidine metabolism; UMP biosynthesis via de novo pathway; UMP from orotate: step 1/2.</text>
</comment>
<comment type="subunit">
    <text evidence="1">Homodimer.</text>
</comment>
<comment type="similarity">
    <text evidence="1">Belongs to the purine/pyrimidine phosphoribosyltransferase family. PyrE subfamily.</text>
</comment>
<organism>
    <name type="scientific">Tropheryma whipplei (strain Twist)</name>
    <name type="common">Whipple's bacillus</name>
    <dbReference type="NCBI Taxonomy" id="203267"/>
    <lineage>
        <taxon>Bacteria</taxon>
        <taxon>Bacillati</taxon>
        <taxon>Actinomycetota</taxon>
        <taxon>Actinomycetes</taxon>
        <taxon>Micrococcales</taxon>
        <taxon>Tropherymataceae</taxon>
        <taxon>Tropheryma</taxon>
    </lineage>
</organism>
<protein>
    <recommendedName>
        <fullName evidence="1">Orotate phosphoribosyltransferase</fullName>
        <shortName evidence="1">OPRT</shortName>
        <shortName evidence="1">OPRTase</shortName>
        <ecNumber evidence="1">2.4.2.10</ecNumber>
    </recommendedName>
</protein>
<feature type="chain" id="PRO_0000110764" description="Orotate phosphoribosyltransferase">
    <location>
        <begin position="1"/>
        <end position="214"/>
    </location>
</feature>
<feature type="binding site" evidence="1">
    <location>
        <position position="125"/>
    </location>
    <ligand>
        <name>5-phospho-alpha-D-ribose 1-diphosphate</name>
        <dbReference type="ChEBI" id="CHEBI:58017"/>
        <note>ligand shared between dimeric partners</note>
    </ligand>
</feature>
<feature type="binding site" description="in other chain" evidence="1">
    <location>
        <position position="126"/>
    </location>
    <ligand>
        <name>5-phospho-alpha-D-ribose 1-diphosphate</name>
        <dbReference type="ChEBI" id="CHEBI:58017"/>
        <note>ligand shared between dimeric partners</note>
    </ligand>
</feature>
<feature type="binding site" evidence="1">
    <location>
        <position position="129"/>
    </location>
    <ligand>
        <name>5-phospho-alpha-D-ribose 1-diphosphate</name>
        <dbReference type="ChEBI" id="CHEBI:58017"/>
        <note>ligand shared between dimeric partners</note>
    </ligand>
</feature>
<feature type="binding site" evidence="1">
    <location>
        <position position="131"/>
    </location>
    <ligand>
        <name>5-phospho-alpha-D-ribose 1-diphosphate</name>
        <dbReference type="ChEBI" id="CHEBI:58017"/>
        <note>ligand shared between dimeric partners</note>
    </ligand>
</feature>
<feature type="binding site" description="in other chain" evidence="1">
    <location>
        <begin position="151"/>
        <end position="159"/>
    </location>
    <ligand>
        <name>5-phospho-alpha-D-ribose 1-diphosphate</name>
        <dbReference type="ChEBI" id="CHEBI:58017"/>
        <note>ligand shared between dimeric partners</note>
    </ligand>
</feature>
<feature type="binding site" evidence="1">
    <location>
        <position position="155"/>
    </location>
    <ligand>
        <name>orotate</name>
        <dbReference type="ChEBI" id="CHEBI:30839"/>
    </ligand>
</feature>
<feature type="binding site" evidence="1">
    <location>
        <position position="183"/>
    </location>
    <ligand>
        <name>orotate</name>
        <dbReference type="ChEBI" id="CHEBI:30839"/>
    </ligand>
</feature>
<dbReference type="EC" id="2.4.2.10" evidence="1"/>
<dbReference type="EMBL" id="AE014184">
    <property type="protein sequence ID" value="AAO44840.1"/>
    <property type="molecule type" value="Genomic_DNA"/>
</dbReference>
<dbReference type="SMR" id="Q83FI4"/>
<dbReference type="STRING" id="203267.TWT_743"/>
<dbReference type="KEGG" id="twh:TWT_743"/>
<dbReference type="eggNOG" id="COG0461">
    <property type="taxonomic scope" value="Bacteria"/>
</dbReference>
<dbReference type="HOGENOM" id="CLU_074878_2_1_11"/>
<dbReference type="OrthoDB" id="1493031at2"/>
<dbReference type="UniPathway" id="UPA00070">
    <property type="reaction ID" value="UER00119"/>
</dbReference>
<dbReference type="Proteomes" id="UP000002200">
    <property type="component" value="Chromosome"/>
</dbReference>
<dbReference type="GO" id="GO:0000287">
    <property type="term" value="F:magnesium ion binding"/>
    <property type="evidence" value="ECO:0007669"/>
    <property type="project" value="UniProtKB-UniRule"/>
</dbReference>
<dbReference type="GO" id="GO:0004588">
    <property type="term" value="F:orotate phosphoribosyltransferase activity"/>
    <property type="evidence" value="ECO:0007669"/>
    <property type="project" value="UniProtKB-UniRule"/>
</dbReference>
<dbReference type="GO" id="GO:0044205">
    <property type="term" value="P:'de novo' UMP biosynthetic process"/>
    <property type="evidence" value="ECO:0007669"/>
    <property type="project" value="UniProtKB-UniRule"/>
</dbReference>
<dbReference type="GO" id="GO:0019856">
    <property type="term" value="P:pyrimidine nucleobase biosynthetic process"/>
    <property type="evidence" value="ECO:0007669"/>
    <property type="project" value="TreeGrafter"/>
</dbReference>
<dbReference type="CDD" id="cd06223">
    <property type="entry name" value="PRTases_typeI"/>
    <property type="match status" value="1"/>
</dbReference>
<dbReference type="FunFam" id="3.40.50.2020:FF:000029">
    <property type="entry name" value="Orotate phosphoribosyltransferase"/>
    <property type="match status" value="1"/>
</dbReference>
<dbReference type="Gene3D" id="3.40.50.2020">
    <property type="match status" value="1"/>
</dbReference>
<dbReference type="HAMAP" id="MF_01208">
    <property type="entry name" value="PyrE"/>
    <property type="match status" value="1"/>
</dbReference>
<dbReference type="InterPro" id="IPR023031">
    <property type="entry name" value="OPRT"/>
</dbReference>
<dbReference type="InterPro" id="IPR004467">
    <property type="entry name" value="Or_phspho_trans_dom"/>
</dbReference>
<dbReference type="InterPro" id="IPR000836">
    <property type="entry name" value="PRibTrfase_dom"/>
</dbReference>
<dbReference type="InterPro" id="IPR029057">
    <property type="entry name" value="PRTase-like"/>
</dbReference>
<dbReference type="NCBIfam" id="TIGR00336">
    <property type="entry name" value="pyrE"/>
    <property type="match status" value="1"/>
</dbReference>
<dbReference type="PANTHER" id="PTHR19278">
    <property type="entry name" value="OROTATE PHOSPHORIBOSYLTRANSFERASE"/>
    <property type="match status" value="1"/>
</dbReference>
<dbReference type="PANTHER" id="PTHR19278:SF9">
    <property type="entry name" value="URIDINE 5'-MONOPHOSPHATE SYNTHASE"/>
    <property type="match status" value="1"/>
</dbReference>
<dbReference type="Pfam" id="PF00156">
    <property type="entry name" value="Pribosyltran"/>
    <property type="match status" value="1"/>
</dbReference>
<dbReference type="SUPFAM" id="SSF53271">
    <property type="entry name" value="PRTase-like"/>
    <property type="match status" value="1"/>
</dbReference>
<gene>
    <name evidence="1" type="primary">pyrE</name>
    <name type="synonym">umpA</name>
    <name type="ordered locus">TWT_743</name>
</gene>